<name>RL10_MARSD</name>
<gene>
    <name evidence="1" type="primary">rplJ</name>
    <name type="ordered locus">Desal_1177</name>
</gene>
<accession>C6C177</accession>
<evidence type="ECO:0000255" key="1">
    <source>
        <dbReference type="HAMAP-Rule" id="MF_00362"/>
    </source>
</evidence>
<evidence type="ECO:0000305" key="2"/>
<protein>
    <recommendedName>
        <fullName evidence="1">Large ribosomal subunit protein uL10</fullName>
    </recommendedName>
    <alternativeName>
        <fullName evidence="2">50S ribosomal protein L10</fullName>
    </alternativeName>
</protein>
<keyword id="KW-1185">Reference proteome</keyword>
<keyword id="KW-0687">Ribonucleoprotein</keyword>
<keyword id="KW-0689">Ribosomal protein</keyword>
<keyword id="KW-0694">RNA-binding</keyword>
<keyword id="KW-0699">rRNA-binding</keyword>
<dbReference type="EMBL" id="CP001649">
    <property type="protein sequence ID" value="ACS79240.1"/>
    <property type="molecule type" value="Genomic_DNA"/>
</dbReference>
<dbReference type="RefSeq" id="WP_015851059.1">
    <property type="nucleotide sequence ID" value="NC_012881.1"/>
</dbReference>
<dbReference type="SMR" id="C6C177"/>
<dbReference type="STRING" id="526222.Desal_1177"/>
<dbReference type="KEGG" id="dsa:Desal_1177"/>
<dbReference type="eggNOG" id="COG0244">
    <property type="taxonomic scope" value="Bacteria"/>
</dbReference>
<dbReference type="HOGENOM" id="CLU_092227_1_2_7"/>
<dbReference type="OrthoDB" id="3186107at2"/>
<dbReference type="Proteomes" id="UP000002601">
    <property type="component" value="Chromosome"/>
</dbReference>
<dbReference type="GO" id="GO:1990904">
    <property type="term" value="C:ribonucleoprotein complex"/>
    <property type="evidence" value="ECO:0007669"/>
    <property type="project" value="UniProtKB-KW"/>
</dbReference>
<dbReference type="GO" id="GO:0005840">
    <property type="term" value="C:ribosome"/>
    <property type="evidence" value="ECO:0007669"/>
    <property type="project" value="UniProtKB-KW"/>
</dbReference>
<dbReference type="GO" id="GO:0070180">
    <property type="term" value="F:large ribosomal subunit rRNA binding"/>
    <property type="evidence" value="ECO:0007669"/>
    <property type="project" value="UniProtKB-UniRule"/>
</dbReference>
<dbReference type="GO" id="GO:0006412">
    <property type="term" value="P:translation"/>
    <property type="evidence" value="ECO:0007669"/>
    <property type="project" value="UniProtKB-UniRule"/>
</dbReference>
<dbReference type="CDD" id="cd05797">
    <property type="entry name" value="Ribosomal_L10"/>
    <property type="match status" value="1"/>
</dbReference>
<dbReference type="Gene3D" id="3.30.70.1730">
    <property type="match status" value="1"/>
</dbReference>
<dbReference type="Gene3D" id="6.10.250.290">
    <property type="match status" value="1"/>
</dbReference>
<dbReference type="HAMAP" id="MF_00362">
    <property type="entry name" value="Ribosomal_uL10"/>
    <property type="match status" value="1"/>
</dbReference>
<dbReference type="InterPro" id="IPR001790">
    <property type="entry name" value="Ribosomal_uL10"/>
</dbReference>
<dbReference type="InterPro" id="IPR043141">
    <property type="entry name" value="Ribosomal_uL10-like_sf"/>
</dbReference>
<dbReference type="InterPro" id="IPR022973">
    <property type="entry name" value="Ribosomal_uL10_bac"/>
</dbReference>
<dbReference type="InterPro" id="IPR047865">
    <property type="entry name" value="Ribosomal_uL10_bac_type"/>
</dbReference>
<dbReference type="NCBIfam" id="NF000955">
    <property type="entry name" value="PRK00099.1-1"/>
    <property type="match status" value="1"/>
</dbReference>
<dbReference type="PANTHER" id="PTHR11560">
    <property type="entry name" value="39S RIBOSOMAL PROTEIN L10, MITOCHONDRIAL"/>
    <property type="match status" value="1"/>
</dbReference>
<dbReference type="Pfam" id="PF00466">
    <property type="entry name" value="Ribosomal_L10"/>
    <property type="match status" value="1"/>
</dbReference>
<dbReference type="SUPFAM" id="SSF160369">
    <property type="entry name" value="Ribosomal protein L10-like"/>
    <property type="match status" value="1"/>
</dbReference>
<organism>
    <name type="scientific">Maridesulfovibrio salexigens (strain ATCC 14822 / DSM 2638 / NCIMB 8403 / VKM B-1763)</name>
    <name type="common">Desulfovibrio salexigens</name>
    <dbReference type="NCBI Taxonomy" id="526222"/>
    <lineage>
        <taxon>Bacteria</taxon>
        <taxon>Pseudomonadati</taxon>
        <taxon>Thermodesulfobacteriota</taxon>
        <taxon>Desulfovibrionia</taxon>
        <taxon>Desulfovibrionales</taxon>
        <taxon>Desulfovibrionaceae</taxon>
        <taxon>Maridesulfovibrio</taxon>
    </lineage>
</organism>
<proteinExistence type="inferred from homology"/>
<sequence>MNRQEKAQIIEQLKEKAERASIAIVTDFKGLGVEEFTQLRANLRNVGVDCQVVKNTLARLAFTGTDHEVLADKFKENCAIVIGYDDPVAAAKAVADFAKESKTFDMRFASLEGKYLDEDGVKALSKLPSKEELLGKALGTMNAVPTNFVSLLANVPRGFLNVLTALKDQKEAA</sequence>
<comment type="function">
    <text evidence="1">Forms part of the ribosomal stalk, playing a central role in the interaction of the ribosome with GTP-bound translation factors.</text>
</comment>
<comment type="subunit">
    <text evidence="1">Part of the ribosomal stalk of the 50S ribosomal subunit. The N-terminus interacts with L11 and the large rRNA to form the base of the stalk. The C-terminus forms an elongated spine to which L12 dimers bind in a sequential fashion forming a multimeric L10(L12)X complex.</text>
</comment>
<comment type="similarity">
    <text evidence="1">Belongs to the universal ribosomal protein uL10 family.</text>
</comment>
<reference key="1">
    <citation type="submission" date="2009-06" db="EMBL/GenBank/DDBJ databases">
        <title>Complete sequence of Desulfovibrio salexigens DSM 2638.</title>
        <authorList>
            <consortium name="US DOE Joint Genome Institute"/>
            <person name="Lucas S."/>
            <person name="Copeland A."/>
            <person name="Lapidus A."/>
            <person name="Glavina del Rio T."/>
            <person name="Tice H."/>
            <person name="Bruce D."/>
            <person name="Goodwin L."/>
            <person name="Pitluck S."/>
            <person name="Munk A.C."/>
            <person name="Brettin T."/>
            <person name="Detter J.C."/>
            <person name="Han C."/>
            <person name="Tapia R."/>
            <person name="Larimer F."/>
            <person name="Land M."/>
            <person name="Hauser L."/>
            <person name="Kyrpides N."/>
            <person name="Anderson I."/>
            <person name="Wall J.D."/>
            <person name="Arkin A.P."/>
            <person name="Dehal P."/>
            <person name="Chivian D."/>
            <person name="Giles B."/>
            <person name="Hazen T.C."/>
        </authorList>
    </citation>
    <scope>NUCLEOTIDE SEQUENCE [LARGE SCALE GENOMIC DNA]</scope>
    <source>
        <strain>ATCC 14822 / DSM 2638 / NCIMB 8403 / VKM B-1763</strain>
    </source>
</reference>
<feature type="chain" id="PRO_1000205439" description="Large ribosomal subunit protein uL10">
    <location>
        <begin position="1"/>
        <end position="173"/>
    </location>
</feature>